<protein>
    <recommendedName>
        <fullName evidence="1">Putative pre-16S rRNA nuclease</fullName>
        <ecNumber evidence="1">3.1.-.-</ecNumber>
    </recommendedName>
</protein>
<name>YQGF_SALHS</name>
<keyword id="KW-0963">Cytoplasm</keyword>
<keyword id="KW-0378">Hydrolase</keyword>
<keyword id="KW-0540">Nuclease</keyword>
<keyword id="KW-0690">Ribosome biogenesis</keyword>
<gene>
    <name evidence="1" type="primary">yqgF</name>
    <name type="ordered locus">SeHA_C3336</name>
</gene>
<evidence type="ECO:0000255" key="1">
    <source>
        <dbReference type="HAMAP-Rule" id="MF_00651"/>
    </source>
</evidence>
<feature type="chain" id="PRO_1000131070" description="Putative pre-16S rRNA nuclease">
    <location>
        <begin position="1"/>
        <end position="138"/>
    </location>
</feature>
<organism>
    <name type="scientific">Salmonella heidelberg (strain SL476)</name>
    <dbReference type="NCBI Taxonomy" id="454169"/>
    <lineage>
        <taxon>Bacteria</taxon>
        <taxon>Pseudomonadati</taxon>
        <taxon>Pseudomonadota</taxon>
        <taxon>Gammaproteobacteria</taxon>
        <taxon>Enterobacterales</taxon>
        <taxon>Enterobacteriaceae</taxon>
        <taxon>Salmonella</taxon>
    </lineage>
</organism>
<reference key="1">
    <citation type="journal article" date="2011" name="J. Bacteriol.">
        <title>Comparative genomics of 28 Salmonella enterica isolates: evidence for CRISPR-mediated adaptive sublineage evolution.</title>
        <authorList>
            <person name="Fricke W.F."/>
            <person name="Mammel M.K."/>
            <person name="McDermott P.F."/>
            <person name="Tartera C."/>
            <person name="White D.G."/>
            <person name="Leclerc J.E."/>
            <person name="Ravel J."/>
            <person name="Cebula T.A."/>
        </authorList>
    </citation>
    <scope>NUCLEOTIDE SEQUENCE [LARGE SCALE GENOMIC DNA]</scope>
    <source>
        <strain>SL476</strain>
    </source>
</reference>
<dbReference type="EC" id="3.1.-.-" evidence="1"/>
<dbReference type="EMBL" id="CP001120">
    <property type="protein sequence ID" value="ACF68747.1"/>
    <property type="molecule type" value="Genomic_DNA"/>
</dbReference>
<dbReference type="SMR" id="B4THI2"/>
<dbReference type="KEGG" id="seh:SeHA_C3336"/>
<dbReference type="HOGENOM" id="CLU_098240_3_0_6"/>
<dbReference type="Proteomes" id="UP000001866">
    <property type="component" value="Chromosome"/>
</dbReference>
<dbReference type="GO" id="GO:0005829">
    <property type="term" value="C:cytosol"/>
    <property type="evidence" value="ECO:0007669"/>
    <property type="project" value="TreeGrafter"/>
</dbReference>
<dbReference type="GO" id="GO:0004518">
    <property type="term" value="F:nuclease activity"/>
    <property type="evidence" value="ECO:0007669"/>
    <property type="project" value="UniProtKB-KW"/>
</dbReference>
<dbReference type="GO" id="GO:0000967">
    <property type="term" value="P:rRNA 5'-end processing"/>
    <property type="evidence" value="ECO:0007669"/>
    <property type="project" value="UniProtKB-UniRule"/>
</dbReference>
<dbReference type="CDD" id="cd16964">
    <property type="entry name" value="YqgF"/>
    <property type="match status" value="1"/>
</dbReference>
<dbReference type="FunFam" id="3.30.420.140:FF:000002">
    <property type="entry name" value="Putative pre-16S rRNA nuclease"/>
    <property type="match status" value="1"/>
</dbReference>
<dbReference type="Gene3D" id="3.30.420.140">
    <property type="entry name" value="YqgF/RNase H-like domain"/>
    <property type="match status" value="1"/>
</dbReference>
<dbReference type="HAMAP" id="MF_00651">
    <property type="entry name" value="Nuclease_YqgF"/>
    <property type="match status" value="1"/>
</dbReference>
<dbReference type="InterPro" id="IPR012337">
    <property type="entry name" value="RNaseH-like_sf"/>
</dbReference>
<dbReference type="InterPro" id="IPR005227">
    <property type="entry name" value="YqgF"/>
</dbReference>
<dbReference type="InterPro" id="IPR006641">
    <property type="entry name" value="YqgF/RNaseH-like_dom"/>
</dbReference>
<dbReference type="InterPro" id="IPR037027">
    <property type="entry name" value="YqgF/RNaseH-like_dom_sf"/>
</dbReference>
<dbReference type="NCBIfam" id="TIGR00250">
    <property type="entry name" value="RNAse_H_YqgF"/>
    <property type="match status" value="1"/>
</dbReference>
<dbReference type="PANTHER" id="PTHR33317">
    <property type="entry name" value="POLYNUCLEOTIDYL TRANSFERASE, RIBONUCLEASE H-LIKE SUPERFAMILY PROTEIN"/>
    <property type="match status" value="1"/>
</dbReference>
<dbReference type="PANTHER" id="PTHR33317:SF4">
    <property type="entry name" value="POLYNUCLEOTIDYL TRANSFERASE, RIBONUCLEASE H-LIKE SUPERFAMILY PROTEIN"/>
    <property type="match status" value="1"/>
</dbReference>
<dbReference type="Pfam" id="PF03652">
    <property type="entry name" value="RuvX"/>
    <property type="match status" value="1"/>
</dbReference>
<dbReference type="SMART" id="SM00732">
    <property type="entry name" value="YqgFc"/>
    <property type="match status" value="1"/>
</dbReference>
<dbReference type="SUPFAM" id="SSF53098">
    <property type="entry name" value="Ribonuclease H-like"/>
    <property type="match status" value="1"/>
</dbReference>
<proteinExistence type="inferred from homology"/>
<comment type="function">
    <text evidence="1">Could be a nuclease involved in processing of the 5'-end of pre-16S rRNA.</text>
</comment>
<comment type="subcellular location">
    <subcellularLocation>
        <location evidence="1">Cytoplasm</location>
    </subcellularLocation>
</comment>
<comment type="similarity">
    <text evidence="1">Belongs to the YqgF nuclease family.</text>
</comment>
<sequence length="138" mass="15218">MSDTLLAFDFGTKSIGVAIGQRITGTARPLPAIKAQDGTPDWTLIERLLKEWQPDEIIVGLPLNMDGTEQPLTARARKFANRIHGRFGVTVTLHDERLSTVEARSGLFERGGYRALNKGKVDSASAVIILESYFEQGY</sequence>
<accession>B4THI2</accession>